<sequence length="1187" mass="131648">MATESTTNTTTIIARADQHDIDLHKASDRVNFGSIKEPIDVPYLLGVQTDSFDWLIGSDRWKARVEEDEKNGTNTVAHTSGLDEVFNEISPIENFAQTMSLTFSDPYFEEPRHTVQECKEKDYTYSAPLYVNAEFENGDTGEIKSQTVFMGDFPLQTPHGTFIIGGTERVIVSQLVRSPGVYFDRQQDRTSDKEVFGAKIIPSRGAWLEFEIDKKDQPQVRVDRKRKQSAIVFLMAIGMTKSEIAQAFKDYPLVLDALEKETLETQDEALVDLYRKIRPADTPTPEAGKNLLDSFYFNTKRYDLARVGRYKINRKLGVEADFNDRSLHQEDIIATIKYLVALHDGAATFPGKRNGEDVDLRVDVDDIDHFGNRRIRQVGELIQNQLRTGLSRMERVVRERMTTQDAEAITPQSLINIRPVNATIKEFFGTSQLSQFMDQNNPLSGVTNKRRLSALGPGGLSRDRASMEVRDVHPSHFGRMCPIESPEGPNIGLIGSLATFGRVNPFGFIETPYRKVVNGHVTDEVEYMTADRDLDHVIAQANQELDENGNFVSKSALARVGEEEAVDVPVSSVDYMDVSPRQMVSLGASLIPFLEHDEGHRALMGTNMQRQAVPLIESERPLVGTGSEWRAANDSGDVIKSEKDGVVTYVSADLIRVMNDDGTTSSYKLAKFQRSNQTTCYNQRPIIHDGERVEAGSVLADGPAIQKGDLALGKNLLIAFMPWNGYNYEDAVIISQRLVQDDTLSSIHIEEYEIDARETKLGAEEITRDLPNVGEDAVANLDERGIIRIGAEVEAGDILVGKVTPKGETELTPEERLLRAIFGEKSREVRDTSLRVPHGETGTVIGVKEITREDAEEDGDELPNGVNQMIRVYIAQHRKITVGDKLSGRHGNKGCISRILPEEDMPFLADGTPVDIMLNPLGVPSRMNLGQVLELHLGWIAHSGWDISLDPNMEAEWKKLVPSGAEKAEPNTPVATPVFDGVKPEVLKGLLSTTLPNRDGDRLVGPDGKATLFDGRTGEPYTKPISVGYMYMLKLHHLVDDKIHARSTGPYSMITQQPLGGKAQFGGQRFGEMEVWALEAYGAAYTLHEMMTTKSDDVDGRVRVYGAIVKGDNLPPAGIPESFKVLLKEMQSLSLNVEVLNAEGVAIDMKDEDDDPASSADDLGFNIGARPDAAAKEDQKAEEPEYQ</sequence>
<organism>
    <name type="scientific">Bifidobacterium longum subsp. infantis (strain ATCC 15697 / DSM 20088 / JCM 1222 / NCTC 11817 / S12)</name>
    <dbReference type="NCBI Taxonomy" id="391904"/>
    <lineage>
        <taxon>Bacteria</taxon>
        <taxon>Bacillati</taxon>
        <taxon>Actinomycetota</taxon>
        <taxon>Actinomycetes</taxon>
        <taxon>Bifidobacteriales</taxon>
        <taxon>Bifidobacteriaceae</taxon>
        <taxon>Bifidobacterium</taxon>
    </lineage>
</organism>
<accession>B7GUG7</accession>
<accession>E8MMC7</accession>
<feature type="chain" id="PRO_1000165790" description="DNA-directed RNA polymerase subunit beta">
    <location>
        <begin position="1"/>
        <end position="1187"/>
    </location>
</feature>
<feature type="region of interest" description="Disordered" evidence="2">
    <location>
        <begin position="1150"/>
        <end position="1187"/>
    </location>
</feature>
<feature type="compositionally biased region" description="Basic and acidic residues" evidence="2">
    <location>
        <begin position="1173"/>
        <end position="1187"/>
    </location>
</feature>
<protein>
    <recommendedName>
        <fullName evidence="1">DNA-directed RNA polymerase subunit beta</fullName>
        <shortName evidence="1">RNAP subunit beta</shortName>
        <ecNumber evidence="1">2.7.7.6</ecNumber>
    </recommendedName>
    <alternativeName>
        <fullName evidence="1">RNA polymerase subunit beta</fullName>
    </alternativeName>
    <alternativeName>
        <fullName evidence="1">Transcriptase subunit beta</fullName>
    </alternativeName>
</protein>
<proteinExistence type="inferred from homology"/>
<name>RPOB_BIFLS</name>
<keyword id="KW-0240">DNA-directed RNA polymerase</keyword>
<keyword id="KW-0548">Nucleotidyltransferase</keyword>
<keyword id="KW-0804">Transcription</keyword>
<keyword id="KW-0808">Transferase</keyword>
<comment type="function">
    <text evidence="1">DNA-dependent RNA polymerase catalyzes the transcription of DNA into RNA using the four ribonucleoside triphosphates as substrates.</text>
</comment>
<comment type="catalytic activity">
    <reaction evidence="1">
        <text>RNA(n) + a ribonucleoside 5'-triphosphate = RNA(n+1) + diphosphate</text>
        <dbReference type="Rhea" id="RHEA:21248"/>
        <dbReference type="Rhea" id="RHEA-COMP:14527"/>
        <dbReference type="Rhea" id="RHEA-COMP:17342"/>
        <dbReference type="ChEBI" id="CHEBI:33019"/>
        <dbReference type="ChEBI" id="CHEBI:61557"/>
        <dbReference type="ChEBI" id="CHEBI:140395"/>
        <dbReference type="EC" id="2.7.7.6"/>
    </reaction>
</comment>
<comment type="subunit">
    <text evidence="1">The RNAP catalytic core consists of 2 alpha, 1 beta, 1 beta' and 1 omega subunit. When a sigma factor is associated with the core the holoenzyme is formed, which can initiate transcription.</text>
</comment>
<comment type="similarity">
    <text evidence="1">Belongs to the RNA polymerase beta chain family.</text>
</comment>
<evidence type="ECO:0000255" key="1">
    <source>
        <dbReference type="HAMAP-Rule" id="MF_01321"/>
    </source>
</evidence>
<evidence type="ECO:0000256" key="2">
    <source>
        <dbReference type="SAM" id="MobiDB-lite"/>
    </source>
</evidence>
<reference key="1">
    <citation type="journal article" date="2008" name="Proc. Natl. Acad. Sci. U.S.A.">
        <title>The genome sequence of Bifidobacterium longum subsp. infantis reveals adaptations for milk utilization within the infant microbiome.</title>
        <authorList>
            <person name="Sela D.A."/>
            <person name="Chapman J."/>
            <person name="Adeuya A."/>
            <person name="Kim J.H."/>
            <person name="Chen F."/>
            <person name="Whitehead T.R."/>
            <person name="Lapidus A."/>
            <person name="Rokhsar D.S."/>
            <person name="Lebrilla C.B."/>
            <person name="German J.B."/>
            <person name="Price N.P."/>
            <person name="Richardson P.M."/>
            <person name="Mills D.A."/>
        </authorList>
    </citation>
    <scope>NUCLEOTIDE SEQUENCE [LARGE SCALE GENOMIC DNA]</scope>
    <source>
        <strain>ATCC 15697 / DSM 20088 / JCM 1222 / NCTC 11817 / S12</strain>
    </source>
</reference>
<reference key="2">
    <citation type="journal article" date="2011" name="Nature">
        <title>Bifidobacteria can protect from enteropathogenic infection through production of acetate.</title>
        <authorList>
            <person name="Fukuda S."/>
            <person name="Toh H."/>
            <person name="Hase K."/>
            <person name="Oshima K."/>
            <person name="Nakanishi Y."/>
            <person name="Yoshimura K."/>
            <person name="Tobe T."/>
            <person name="Clarke J.M."/>
            <person name="Topping D.L."/>
            <person name="Suzuki T."/>
            <person name="Taylor T.D."/>
            <person name="Itoh K."/>
            <person name="Kikuchi J."/>
            <person name="Morita H."/>
            <person name="Hattori M."/>
            <person name="Ohno H."/>
        </authorList>
    </citation>
    <scope>NUCLEOTIDE SEQUENCE [LARGE SCALE GENOMIC DNA]</scope>
    <source>
        <strain>ATCC 15697 / DSM 20088 / JCM 1222 / NCTC 11817 / S12</strain>
    </source>
</reference>
<gene>
    <name evidence="1" type="primary">rpoB</name>
    <name type="ordered locus">Blon_2049</name>
    <name type="ordered locus">BLIJ_2127</name>
</gene>
<dbReference type="EC" id="2.7.7.6" evidence="1"/>
<dbReference type="EMBL" id="CP001095">
    <property type="protein sequence ID" value="ACJ53113.1"/>
    <property type="molecule type" value="Genomic_DNA"/>
</dbReference>
<dbReference type="EMBL" id="AP010889">
    <property type="protein sequence ID" value="BAJ69704.1"/>
    <property type="molecule type" value="Genomic_DNA"/>
</dbReference>
<dbReference type="RefSeq" id="WP_012578318.1">
    <property type="nucleotide sequence ID" value="NC_011593.1"/>
</dbReference>
<dbReference type="SMR" id="B7GUG7"/>
<dbReference type="KEGG" id="bln:Blon_2049"/>
<dbReference type="KEGG" id="blon:BLIJ_2127"/>
<dbReference type="PATRIC" id="fig|391904.8.peg.2134"/>
<dbReference type="HOGENOM" id="CLU_000524_4_1_11"/>
<dbReference type="Proteomes" id="UP000001360">
    <property type="component" value="Chromosome"/>
</dbReference>
<dbReference type="GO" id="GO:0000428">
    <property type="term" value="C:DNA-directed RNA polymerase complex"/>
    <property type="evidence" value="ECO:0007669"/>
    <property type="project" value="UniProtKB-KW"/>
</dbReference>
<dbReference type="GO" id="GO:0003677">
    <property type="term" value="F:DNA binding"/>
    <property type="evidence" value="ECO:0007669"/>
    <property type="project" value="UniProtKB-UniRule"/>
</dbReference>
<dbReference type="GO" id="GO:0003899">
    <property type="term" value="F:DNA-directed RNA polymerase activity"/>
    <property type="evidence" value="ECO:0007669"/>
    <property type="project" value="UniProtKB-UniRule"/>
</dbReference>
<dbReference type="GO" id="GO:0032549">
    <property type="term" value="F:ribonucleoside binding"/>
    <property type="evidence" value="ECO:0007669"/>
    <property type="project" value="InterPro"/>
</dbReference>
<dbReference type="GO" id="GO:0006351">
    <property type="term" value="P:DNA-templated transcription"/>
    <property type="evidence" value="ECO:0007669"/>
    <property type="project" value="UniProtKB-UniRule"/>
</dbReference>
<dbReference type="CDD" id="cd00653">
    <property type="entry name" value="RNA_pol_B_RPB2"/>
    <property type="match status" value="1"/>
</dbReference>
<dbReference type="FunFam" id="3.90.1800.10:FF:000001">
    <property type="entry name" value="DNA-directed RNA polymerase subunit beta"/>
    <property type="match status" value="1"/>
</dbReference>
<dbReference type="Gene3D" id="2.40.50.100">
    <property type="match status" value="1"/>
</dbReference>
<dbReference type="Gene3D" id="2.40.50.150">
    <property type="match status" value="1"/>
</dbReference>
<dbReference type="Gene3D" id="3.90.1100.10">
    <property type="match status" value="1"/>
</dbReference>
<dbReference type="Gene3D" id="2.30.150.10">
    <property type="entry name" value="DNA-directed RNA polymerase, beta subunit, external 1 domain"/>
    <property type="match status" value="1"/>
</dbReference>
<dbReference type="Gene3D" id="2.40.270.10">
    <property type="entry name" value="DNA-directed RNA polymerase, subunit 2, domain 6"/>
    <property type="match status" value="1"/>
</dbReference>
<dbReference type="Gene3D" id="3.90.1800.10">
    <property type="entry name" value="RNA polymerase alpha subunit dimerisation domain"/>
    <property type="match status" value="1"/>
</dbReference>
<dbReference type="Gene3D" id="3.90.1110.10">
    <property type="entry name" value="RNA polymerase Rpb2, domain 2"/>
    <property type="match status" value="1"/>
</dbReference>
<dbReference type="HAMAP" id="MF_01321">
    <property type="entry name" value="RNApol_bact_RpoB"/>
    <property type="match status" value="1"/>
</dbReference>
<dbReference type="InterPro" id="IPR042107">
    <property type="entry name" value="DNA-dir_RNA_pol_bsu_ext_1_sf"/>
</dbReference>
<dbReference type="InterPro" id="IPR019462">
    <property type="entry name" value="DNA-dir_RNA_pol_bsu_external_1"/>
</dbReference>
<dbReference type="InterPro" id="IPR015712">
    <property type="entry name" value="DNA-dir_RNA_pol_su2"/>
</dbReference>
<dbReference type="InterPro" id="IPR007120">
    <property type="entry name" value="DNA-dir_RNAP_su2_dom"/>
</dbReference>
<dbReference type="InterPro" id="IPR037033">
    <property type="entry name" value="DNA-dir_RNAP_su2_hyb_sf"/>
</dbReference>
<dbReference type="InterPro" id="IPR010243">
    <property type="entry name" value="RNA_pol_bsu_bac"/>
</dbReference>
<dbReference type="InterPro" id="IPR007121">
    <property type="entry name" value="RNA_pol_bsu_CS"/>
</dbReference>
<dbReference type="InterPro" id="IPR007644">
    <property type="entry name" value="RNA_pol_bsu_protrusion"/>
</dbReference>
<dbReference type="InterPro" id="IPR007642">
    <property type="entry name" value="RNA_pol_Rpb2_2"/>
</dbReference>
<dbReference type="InterPro" id="IPR037034">
    <property type="entry name" value="RNA_pol_Rpb2_2_sf"/>
</dbReference>
<dbReference type="InterPro" id="IPR007645">
    <property type="entry name" value="RNA_pol_Rpb2_3"/>
</dbReference>
<dbReference type="InterPro" id="IPR007641">
    <property type="entry name" value="RNA_pol_Rpb2_7"/>
</dbReference>
<dbReference type="InterPro" id="IPR014724">
    <property type="entry name" value="RNA_pol_RPB2_OB-fold"/>
</dbReference>
<dbReference type="NCBIfam" id="NF001616">
    <property type="entry name" value="PRK00405.1"/>
    <property type="match status" value="1"/>
</dbReference>
<dbReference type="NCBIfam" id="TIGR02013">
    <property type="entry name" value="rpoB"/>
    <property type="match status" value="1"/>
</dbReference>
<dbReference type="PANTHER" id="PTHR20856">
    <property type="entry name" value="DNA-DIRECTED RNA POLYMERASE I SUBUNIT 2"/>
    <property type="match status" value="1"/>
</dbReference>
<dbReference type="Pfam" id="PF04563">
    <property type="entry name" value="RNA_pol_Rpb2_1"/>
    <property type="match status" value="1"/>
</dbReference>
<dbReference type="Pfam" id="PF04561">
    <property type="entry name" value="RNA_pol_Rpb2_2"/>
    <property type="match status" value="1"/>
</dbReference>
<dbReference type="Pfam" id="PF04565">
    <property type="entry name" value="RNA_pol_Rpb2_3"/>
    <property type="match status" value="1"/>
</dbReference>
<dbReference type="Pfam" id="PF10385">
    <property type="entry name" value="RNA_pol_Rpb2_45"/>
    <property type="match status" value="1"/>
</dbReference>
<dbReference type="Pfam" id="PF00562">
    <property type="entry name" value="RNA_pol_Rpb2_6"/>
    <property type="match status" value="1"/>
</dbReference>
<dbReference type="Pfam" id="PF04560">
    <property type="entry name" value="RNA_pol_Rpb2_7"/>
    <property type="match status" value="1"/>
</dbReference>
<dbReference type="SUPFAM" id="SSF64484">
    <property type="entry name" value="beta and beta-prime subunits of DNA dependent RNA-polymerase"/>
    <property type="match status" value="1"/>
</dbReference>
<dbReference type="PROSITE" id="PS01166">
    <property type="entry name" value="RNA_POL_BETA"/>
    <property type="match status" value="1"/>
</dbReference>